<name>FETP_SHESW</name>
<sequence>MARTVNCVYLNKEADGLDFQLYPGDLGKRIFDNISKEAWGLWQKKQTMLINEKKLNMMNVDDRKFLEEQMTSFLFEGKDVEIEGFVPEKDQD</sequence>
<keyword id="KW-0408">Iron</keyword>
<reference key="1">
    <citation type="submission" date="2006-12" db="EMBL/GenBank/DDBJ databases">
        <title>Complete sequence of Shewanella sp. W3-18-1.</title>
        <authorList>
            <consortium name="US DOE Joint Genome Institute"/>
            <person name="Copeland A."/>
            <person name="Lucas S."/>
            <person name="Lapidus A."/>
            <person name="Barry K."/>
            <person name="Detter J.C."/>
            <person name="Glavina del Rio T."/>
            <person name="Hammon N."/>
            <person name="Israni S."/>
            <person name="Dalin E."/>
            <person name="Tice H."/>
            <person name="Pitluck S."/>
            <person name="Chain P."/>
            <person name="Malfatti S."/>
            <person name="Shin M."/>
            <person name="Vergez L."/>
            <person name="Schmutz J."/>
            <person name="Larimer F."/>
            <person name="Land M."/>
            <person name="Hauser L."/>
            <person name="Kyrpides N."/>
            <person name="Lykidis A."/>
            <person name="Tiedje J."/>
            <person name="Richardson P."/>
        </authorList>
    </citation>
    <scope>NUCLEOTIDE SEQUENCE [LARGE SCALE GENOMIC DNA]</scope>
    <source>
        <strain>W3-18-1</strain>
    </source>
</reference>
<proteinExistence type="inferred from homology"/>
<gene>
    <name type="ordered locus">Sputw3181_1310</name>
</gene>
<accession>A1RHK8</accession>
<evidence type="ECO:0000255" key="1">
    <source>
        <dbReference type="HAMAP-Rule" id="MF_00686"/>
    </source>
</evidence>
<dbReference type="EMBL" id="CP000503">
    <property type="protein sequence ID" value="ABM24153.1"/>
    <property type="molecule type" value="Genomic_DNA"/>
</dbReference>
<dbReference type="RefSeq" id="WP_011788659.1">
    <property type="nucleotide sequence ID" value="NC_008750.1"/>
</dbReference>
<dbReference type="SMR" id="A1RHK8"/>
<dbReference type="KEGG" id="shw:Sputw3181_1310"/>
<dbReference type="HOGENOM" id="CLU_170994_0_0_6"/>
<dbReference type="Proteomes" id="UP000002597">
    <property type="component" value="Chromosome"/>
</dbReference>
<dbReference type="GO" id="GO:0005829">
    <property type="term" value="C:cytosol"/>
    <property type="evidence" value="ECO:0007669"/>
    <property type="project" value="TreeGrafter"/>
</dbReference>
<dbReference type="GO" id="GO:0005506">
    <property type="term" value="F:iron ion binding"/>
    <property type="evidence" value="ECO:0007669"/>
    <property type="project" value="UniProtKB-UniRule"/>
</dbReference>
<dbReference type="GO" id="GO:0034599">
    <property type="term" value="P:cellular response to oxidative stress"/>
    <property type="evidence" value="ECO:0007669"/>
    <property type="project" value="TreeGrafter"/>
</dbReference>
<dbReference type="FunFam" id="1.10.3880.10:FF:000001">
    <property type="entry name" value="Probable Fe(2+)-trafficking protein"/>
    <property type="match status" value="1"/>
</dbReference>
<dbReference type="Gene3D" id="1.10.3880.10">
    <property type="entry name" value="Fe(II) trafficking protein YggX"/>
    <property type="match status" value="1"/>
</dbReference>
<dbReference type="HAMAP" id="MF_00686">
    <property type="entry name" value="Fe_traffic_YggX"/>
    <property type="match status" value="1"/>
</dbReference>
<dbReference type="InterPro" id="IPR007457">
    <property type="entry name" value="Fe_traffick_prot_YggX"/>
</dbReference>
<dbReference type="InterPro" id="IPR036766">
    <property type="entry name" value="Fe_traffick_prot_YggX_sf"/>
</dbReference>
<dbReference type="NCBIfam" id="NF003817">
    <property type="entry name" value="PRK05408.1"/>
    <property type="match status" value="1"/>
</dbReference>
<dbReference type="PANTHER" id="PTHR36965">
    <property type="entry name" value="FE(2+)-TRAFFICKING PROTEIN-RELATED"/>
    <property type="match status" value="1"/>
</dbReference>
<dbReference type="PANTHER" id="PTHR36965:SF1">
    <property type="entry name" value="FE(2+)-TRAFFICKING PROTEIN-RELATED"/>
    <property type="match status" value="1"/>
</dbReference>
<dbReference type="Pfam" id="PF04362">
    <property type="entry name" value="Iron_traffic"/>
    <property type="match status" value="1"/>
</dbReference>
<dbReference type="PIRSF" id="PIRSF029827">
    <property type="entry name" value="Fe_traffic_YggX"/>
    <property type="match status" value="1"/>
</dbReference>
<dbReference type="SUPFAM" id="SSF111148">
    <property type="entry name" value="YggX-like"/>
    <property type="match status" value="1"/>
</dbReference>
<feature type="chain" id="PRO_1000045070" description="Probable Fe(2+)-trafficking protein">
    <location>
        <begin position="1"/>
        <end position="92"/>
    </location>
</feature>
<organism>
    <name type="scientific">Shewanella sp. (strain W3-18-1)</name>
    <dbReference type="NCBI Taxonomy" id="351745"/>
    <lineage>
        <taxon>Bacteria</taxon>
        <taxon>Pseudomonadati</taxon>
        <taxon>Pseudomonadota</taxon>
        <taxon>Gammaproteobacteria</taxon>
        <taxon>Alteromonadales</taxon>
        <taxon>Shewanellaceae</taxon>
        <taxon>Shewanella</taxon>
    </lineage>
</organism>
<protein>
    <recommendedName>
        <fullName evidence="1">Probable Fe(2+)-trafficking protein</fullName>
    </recommendedName>
</protein>
<comment type="function">
    <text evidence="1">Could be a mediator in iron transactions between iron acquisition and iron-requiring processes, such as synthesis and/or repair of Fe-S clusters in biosynthetic enzymes.</text>
</comment>
<comment type="similarity">
    <text evidence="1">Belongs to the Fe(2+)-trafficking protein family.</text>
</comment>